<feature type="initiator methionine" description="Removed" evidence="1">
    <location>
        <position position="1"/>
    </location>
</feature>
<feature type="chain" id="PRO_0000221304" description="Histone H3">
    <location>
        <begin position="2"/>
        <end position="136"/>
    </location>
</feature>
<feature type="region of interest" description="Disordered" evidence="2">
    <location>
        <begin position="1"/>
        <end position="43"/>
    </location>
</feature>
<feature type="compositionally biased region" description="Basic residues" evidence="2">
    <location>
        <begin position="16"/>
        <end position="27"/>
    </location>
</feature>
<feature type="modified residue" description="N6-methylated lysine" evidence="1">
    <location>
        <position position="10"/>
    </location>
</feature>
<feature type="modified residue" description="N6-acetyllysine" evidence="1">
    <location>
        <position position="15"/>
    </location>
</feature>
<feature type="modified residue" description="N6-acetyllysine" evidence="1">
    <location>
        <position position="24"/>
    </location>
</feature>
<feature type="modified residue" description="N6-methylated lysine" evidence="1">
    <location>
        <position position="28"/>
    </location>
</feature>
<feature type="modified residue" description="N6-methylated lysine" evidence="1">
    <location>
        <position position="37"/>
    </location>
</feature>
<organism>
    <name type="scientific">Euplotes crassus</name>
    <dbReference type="NCBI Taxonomy" id="5936"/>
    <lineage>
        <taxon>Eukaryota</taxon>
        <taxon>Sar</taxon>
        <taxon>Alveolata</taxon>
        <taxon>Ciliophora</taxon>
        <taxon>Intramacronucleata</taxon>
        <taxon>Spirotrichea</taxon>
        <taxon>Hypotrichia</taxon>
        <taxon>Euplotida</taxon>
        <taxon>Euplotidae</taxon>
        <taxon>Moneuplotes</taxon>
    </lineage>
</organism>
<name>H3_EUPCR</name>
<keyword id="KW-0007">Acetylation</keyword>
<keyword id="KW-0158">Chromosome</keyword>
<keyword id="KW-0238">DNA-binding</keyword>
<keyword id="KW-0488">Methylation</keyword>
<keyword id="KW-0544">Nucleosome core</keyword>
<keyword id="KW-0539">Nucleus</keyword>
<comment type="function">
    <text>Core component of nucleosome. Nucleosomes wrap and compact DNA into chromatin, limiting DNA accessibility to the cellular machineries which require DNA as a template. Histones thereby play a central role in transcription regulation, DNA repair, DNA replication and chromosomal stability. DNA accessibility is regulated via a complex set of post-translational modifications of histones, also called histone code, and nucleosome remodeling.</text>
</comment>
<comment type="subunit">
    <text>The nucleosome is a histone octamer containing two molecules each of H2A, H2B, H3 and H4 assembled in one H3-H4 heterotetramer and two H2A-H2B heterodimers. The octamer wraps approximately 147 bp of DNA.</text>
</comment>
<comment type="subcellular location">
    <subcellularLocation>
        <location evidence="1">Nucleus</location>
    </subcellularLocation>
    <subcellularLocation>
        <location evidence="1">Chromosome</location>
    </subcellularLocation>
</comment>
<comment type="similarity">
    <text evidence="3">Belongs to the histone H3 family.</text>
</comment>
<reference key="1">
    <citation type="journal article" date="1997" name="Proc. Natl. Acad. Sci. U.S.A.">
        <title>An unusual histone H3 specific for early macronuclear development in Euplotes crassus.</title>
        <authorList>
            <person name="Jahn C.L."/>
            <person name="Ling Z."/>
            <person name="Tebeau C.M."/>
            <person name="Klobutcher L.A."/>
        </authorList>
    </citation>
    <scope>NUCLEOTIDE SEQUENCE [GENOMIC DNA]</scope>
</reference>
<proteinExistence type="inferred from homology"/>
<sequence>MARTKQTARKNVGGKAPRKHIGQKSARKTASTTAGMKKPHRYRPGTVALREIRRYQKSTELLIRKLPFQRLVREIAQEFKGDLRFQSSAVLALQEAAEAYLVSLFEDTNLCAIHAKRVTIMPKDMQLARRIRGERS</sequence>
<evidence type="ECO:0000250" key="1"/>
<evidence type="ECO:0000256" key="2">
    <source>
        <dbReference type="SAM" id="MobiDB-lite"/>
    </source>
</evidence>
<evidence type="ECO:0000305" key="3"/>
<accession>P90543</accession>
<protein>
    <recommendedName>
        <fullName>Histone H3</fullName>
    </recommendedName>
</protein>
<dbReference type="EMBL" id="U75429">
    <property type="protein sequence ID" value="AAB39721.1"/>
    <property type="molecule type" value="Genomic_DNA"/>
</dbReference>
<dbReference type="SMR" id="P90543"/>
<dbReference type="OrthoDB" id="428318at2759"/>
<dbReference type="GO" id="GO:0000786">
    <property type="term" value="C:nucleosome"/>
    <property type="evidence" value="ECO:0007669"/>
    <property type="project" value="UniProtKB-KW"/>
</dbReference>
<dbReference type="GO" id="GO:0005634">
    <property type="term" value="C:nucleus"/>
    <property type="evidence" value="ECO:0007669"/>
    <property type="project" value="UniProtKB-SubCell"/>
</dbReference>
<dbReference type="GO" id="GO:0003677">
    <property type="term" value="F:DNA binding"/>
    <property type="evidence" value="ECO:0007669"/>
    <property type="project" value="UniProtKB-KW"/>
</dbReference>
<dbReference type="GO" id="GO:0046982">
    <property type="term" value="F:protein heterodimerization activity"/>
    <property type="evidence" value="ECO:0007669"/>
    <property type="project" value="InterPro"/>
</dbReference>
<dbReference type="GO" id="GO:0030527">
    <property type="term" value="F:structural constituent of chromatin"/>
    <property type="evidence" value="ECO:0007669"/>
    <property type="project" value="InterPro"/>
</dbReference>
<dbReference type="CDD" id="cd22911">
    <property type="entry name" value="HFD_H3"/>
    <property type="match status" value="1"/>
</dbReference>
<dbReference type="FunFam" id="1.10.20.10:FF:000001">
    <property type="entry name" value="Histone H3"/>
    <property type="match status" value="1"/>
</dbReference>
<dbReference type="Gene3D" id="1.10.20.10">
    <property type="entry name" value="Histone, subunit A"/>
    <property type="match status" value="1"/>
</dbReference>
<dbReference type="InterPro" id="IPR009072">
    <property type="entry name" value="Histone-fold"/>
</dbReference>
<dbReference type="InterPro" id="IPR007125">
    <property type="entry name" value="Histone_H2A/H2B/H3"/>
</dbReference>
<dbReference type="InterPro" id="IPR000164">
    <property type="entry name" value="Histone_H3/CENP-A"/>
</dbReference>
<dbReference type="PANTHER" id="PTHR11426">
    <property type="entry name" value="HISTONE H3"/>
    <property type="match status" value="1"/>
</dbReference>
<dbReference type="Pfam" id="PF00125">
    <property type="entry name" value="Histone"/>
    <property type="match status" value="1"/>
</dbReference>
<dbReference type="PRINTS" id="PR00622">
    <property type="entry name" value="HISTONEH3"/>
</dbReference>
<dbReference type="SMART" id="SM00428">
    <property type="entry name" value="H3"/>
    <property type="match status" value="1"/>
</dbReference>
<dbReference type="SUPFAM" id="SSF47113">
    <property type="entry name" value="Histone-fold"/>
    <property type="match status" value="1"/>
</dbReference>
<dbReference type="PROSITE" id="PS00322">
    <property type="entry name" value="HISTONE_H3_1"/>
    <property type="match status" value="1"/>
</dbReference>
<dbReference type="PROSITE" id="PS00959">
    <property type="entry name" value="HISTONE_H3_2"/>
    <property type="match status" value="1"/>
</dbReference>